<reference key="1">
    <citation type="journal article" date="2008" name="Antimicrob. Agents Chemother.">
        <title>Mutated response regulator graR is responsible for phenotypic conversion of Staphylococcus aureus from heterogeneous vancomycin-intermediate resistance to vancomycin-intermediate resistance.</title>
        <authorList>
            <person name="Neoh H.-M."/>
            <person name="Cui L."/>
            <person name="Yuzawa H."/>
            <person name="Takeuchi F."/>
            <person name="Matsuo M."/>
            <person name="Hiramatsu K."/>
        </authorList>
    </citation>
    <scope>NUCLEOTIDE SEQUENCE [LARGE SCALE GENOMIC DNA]</scope>
    <source>
        <strain>Mu3 / ATCC 700698</strain>
    </source>
</reference>
<keyword id="KW-0963">Cytoplasm</keyword>
<keyword id="KW-0460">Magnesium</keyword>
<keyword id="KW-0479">Metal-binding</keyword>
<keyword id="KW-0548">Nucleotidyltransferase</keyword>
<keyword id="KW-0694">RNA-binding</keyword>
<keyword id="KW-0808">Transferase</keyword>
<accession>A7X1Q8</accession>
<dbReference type="EC" id="2.7.7.8" evidence="1"/>
<dbReference type="EMBL" id="AP009324">
    <property type="protein sequence ID" value="BAF78147.1"/>
    <property type="molecule type" value="Genomic_DNA"/>
</dbReference>
<dbReference type="RefSeq" id="WP_000076690.1">
    <property type="nucleotide sequence ID" value="NZ_CTYB01000004.1"/>
</dbReference>
<dbReference type="SMR" id="A7X1Q8"/>
<dbReference type="KEGG" id="saw:SAHV_1264"/>
<dbReference type="HOGENOM" id="CLU_004217_2_2_9"/>
<dbReference type="GO" id="GO:0005829">
    <property type="term" value="C:cytosol"/>
    <property type="evidence" value="ECO:0007669"/>
    <property type="project" value="TreeGrafter"/>
</dbReference>
<dbReference type="GO" id="GO:0000175">
    <property type="term" value="F:3'-5'-RNA exonuclease activity"/>
    <property type="evidence" value="ECO:0007669"/>
    <property type="project" value="TreeGrafter"/>
</dbReference>
<dbReference type="GO" id="GO:0000287">
    <property type="term" value="F:magnesium ion binding"/>
    <property type="evidence" value="ECO:0007669"/>
    <property type="project" value="UniProtKB-UniRule"/>
</dbReference>
<dbReference type="GO" id="GO:0004654">
    <property type="term" value="F:polyribonucleotide nucleotidyltransferase activity"/>
    <property type="evidence" value="ECO:0007669"/>
    <property type="project" value="UniProtKB-UniRule"/>
</dbReference>
<dbReference type="GO" id="GO:0003723">
    <property type="term" value="F:RNA binding"/>
    <property type="evidence" value="ECO:0007669"/>
    <property type="project" value="UniProtKB-UniRule"/>
</dbReference>
<dbReference type="GO" id="GO:0006402">
    <property type="term" value="P:mRNA catabolic process"/>
    <property type="evidence" value="ECO:0007669"/>
    <property type="project" value="UniProtKB-UniRule"/>
</dbReference>
<dbReference type="GO" id="GO:0006396">
    <property type="term" value="P:RNA processing"/>
    <property type="evidence" value="ECO:0007669"/>
    <property type="project" value="InterPro"/>
</dbReference>
<dbReference type="CDD" id="cd02393">
    <property type="entry name" value="KH-I_PNPase"/>
    <property type="match status" value="1"/>
</dbReference>
<dbReference type="CDD" id="cd11363">
    <property type="entry name" value="RNase_PH_PNPase_1"/>
    <property type="match status" value="1"/>
</dbReference>
<dbReference type="CDD" id="cd11364">
    <property type="entry name" value="RNase_PH_PNPase_2"/>
    <property type="match status" value="1"/>
</dbReference>
<dbReference type="CDD" id="cd04472">
    <property type="entry name" value="S1_PNPase"/>
    <property type="match status" value="1"/>
</dbReference>
<dbReference type="FunFam" id="2.40.50.140:FF:000023">
    <property type="entry name" value="Polyribonucleotide nucleotidyltransferase"/>
    <property type="match status" value="1"/>
</dbReference>
<dbReference type="FunFam" id="3.30.1370.10:FF:000001">
    <property type="entry name" value="Polyribonucleotide nucleotidyltransferase"/>
    <property type="match status" value="1"/>
</dbReference>
<dbReference type="FunFam" id="3.30.230.70:FF:000001">
    <property type="entry name" value="Polyribonucleotide nucleotidyltransferase"/>
    <property type="match status" value="1"/>
</dbReference>
<dbReference type="FunFam" id="3.30.230.70:FF:000002">
    <property type="entry name" value="Polyribonucleotide nucleotidyltransferase"/>
    <property type="match status" value="1"/>
</dbReference>
<dbReference type="Gene3D" id="3.30.230.70">
    <property type="entry name" value="GHMP Kinase, N-terminal domain"/>
    <property type="match status" value="2"/>
</dbReference>
<dbReference type="Gene3D" id="3.30.1370.10">
    <property type="entry name" value="K Homology domain, type 1"/>
    <property type="match status" value="1"/>
</dbReference>
<dbReference type="Gene3D" id="2.40.50.140">
    <property type="entry name" value="Nucleic acid-binding proteins"/>
    <property type="match status" value="1"/>
</dbReference>
<dbReference type="HAMAP" id="MF_01595">
    <property type="entry name" value="PNPase"/>
    <property type="match status" value="1"/>
</dbReference>
<dbReference type="InterPro" id="IPR001247">
    <property type="entry name" value="ExoRNase_PH_dom1"/>
</dbReference>
<dbReference type="InterPro" id="IPR015847">
    <property type="entry name" value="ExoRNase_PH_dom2"/>
</dbReference>
<dbReference type="InterPro" id="IPR036345">
    <property type="entry name" value="ExoRNase_PH_dom2_sf"/>
</dbReference>
<dbReference type="InterPro" id="IPR004087">
    <property type="entry name" value="KH_dom"/>
</dbReference>
<dbReference type="InterPro" id="IPR004088">
    <property type="entry name" value="KH_dom_type_1"/>
</dbReference>
<dbReference type="InterPro" id="IPR036612">
    <property type="entry name" value="KH_dom_type_1_sf"/>
</dbReference>
<dbReference type="InterPro" id="IPR012340">
    <property type="entry name" value="NA-bd_OB-fold"/>
</dbReference>
<dbReference type="InterPro" id="IPR012162">
    <property type="entry name" value="PNPase"/>
</dbReference>
<dbReference type="InterPro" id="IPR027408">
    <property type="entry name" value="PNPase/RNase_PH_dom_sf"/>
</dbReference>
<dbReference type="InterPro" id="IPR015848">
    <property type="entry name" value="PNPase_PH_RNA-bd_bac/org-type"/>
</dbReference>
<dbReference type="InterPro" id="IPR036456">
    <property type="entry name" value="PNPase_PH_RNA-bd_sf"/>
</dbReference>
<dbReference type="InterPro" id="IPR020568">
    <property type="entry name" value="Ribosomal_Su5_D2-typ_SF"/>
</dbReference>
<dbReference type="InterPro" id="IPR003029">
    <property type="entry name" value="S1_domain"/>
</dbReference>
<dbReference type="NCBIfam" id="TIGR03591">
    <property type="entry name" value="polynuc_phos"/>
    <property type="match status" value="1"/>
</dbReference>
<dbReference type="NCBIfam" id="NF008805">
    <property type="entry name" value="PRK11824.1"/>
    <property type="match status" value="1"/>
</dbReference>
<dbReference type="PANTHER" id="PTHR11252">
    <property type="entry name" value="POLYRIBONUCLEOTIDE NUCLEOTIDYLTRANSFERASE"/>
    <property type="match status" value="1"/>
</dbReference>
<dbReference type="PANTHER" id="PTHR11252:SF0">
    <property type="entry name" value="POLYRIBONUCLEOTIDE NUCLEOTIDYLTRANSFERASE 1, MITOCHONDRIAL"/>
    <property type="match status" value="1"/>
</dbReference>
<dbReference type="Pfam" id="PF00013">
    <property type="entry name" value="KH_1"/>
    <property type="match status" value="1"/>
</dbReference>
<dbReference type="Pfam" id="PF03726">
    <property type="entry name" value="PNPase"/>
    <property type="match status" value="1"/>
</dbReference>
<dbReference type="Pfam" id="PF01138">
    <property type="entry name" value="RNase_PH"/>
    <property type="match status" value="2"/>
</dbReference>
<dbReference type="Pfam" id="PF03725">
    <property type="entry name" value="RNase_PH_C"/>
    <property type="match status" value="2"/>
</dbReference>
<dbReference type="Pfam" id="PF00575">
    <property type="entry name" value="S1"/>
    <property type="match status" value="1"/>
</dbReference>
<dbReference type="PIRSF" id="PIRSF005499">
    <property type="entry name" value="PNPase"/>
    <property type="match status" value="1"/>
</dbReference>
<dbReference type="SMART" id="SM00322">
    <property type="entry name" value="KH"/>
    <property type="match status" value="1"/>
</dbReference>
<dbReference type="SMART" id="SM00316">
    <property type="entry name" value="S1"/>
    <property type="match status" value="1"/>
</dbReference>
<dbReference type="SUPFAM" id="SSF54791">
    <property type="entry name" value="Eukaryotic type KH-domain (KH-domain type I)"/>
    <property type="match status" value="1"/>
</dbReference>
<dbReference type="SUPFAM" id="SSF50249">
    <property type="entry name" value="Nucleic acid-binding proteins"/>
    <property type="match status" value="1"/>
</dbReference>
<dbReference type="SUPFAM" id="SSF46915">
    <property type="entry name" value="Polynucleotide phosphorylase/guanosine pentaphosphate synthase (PNPase/GPSI), domain 3"/>
    <property type="match status" value="1"/>
</dbReference>
<dbReference type="SUPFAM" id="SSF55666">
    <property type="entry name" value="Ribonuclease PH domain 2-like"/>
    <property type="match status" value="2"/>
</dbReference>
<dbReference type="SUPFAM" id="SSF54211">
    <property type="entry name" value="Ribosomal protein S5 domain 2-like"/>
    <property type="match status" value="2"/>
</dbReference>
<dbReference type="PROSITE" id="PS50084">
    <property type="entry name" value="KH_TYPE_1"/>
    <property type="match status" value="1"/>
</dbReference>
<dbReference type="PROSITE" id="PS50126">
    <property type="entry name" value="S1"/>
    <property type="match status" value="1"/>
</dbReference>
<feature type="chain" id="PRO_0000329862" description="Polyribonucleotide nucleotidyltransferase">
    <location>
        <begin position="1"/>
        <end position="698"/>
    </location>
</feature>
<feature type="domain" description="KH" evidence="1">
    <location>
        <begin position="557"/>
        <end position="616"/>
    </location>
</feature>
<feature type="domain" description="S1 motif" evidence="1">
    <location>
        <begin position="626"/>
        <end position="694"/>
    </location>
</feature>
<feature type="binding site" evidence="1">
    <location>
        <position position="490"/>
    </location>
    <ligand>
        <name>Mg(2+)</name>
        <dbReference type="ChEBI" id="CHEBI:18420"/>
    </ligand>
</feature>
<feature type="binding site" evidence="1">
    <location>
        <position position="496"/>
    </location>
    <ligand>
        <name>Mg(2+)</name>
        <dbReference type="ChEBI" id="CHEBI:18420"/>
    </ligand>
</feature>
<organism>
    <name type="scientific">Staphylococcus aureus (strain Mu3 / ATCC 700698)</name>
    <dbReference type="NCBI Taxonomy" id="418127"/>
    <lineage>
        <taxon>Bacteria</taxon>
        <taxon>Bacillati</taxon>
        <taxon>Bacillota</taxon>
        <taxon>Bacilli</taxon>
        <taxon>Bacillales</taxon>
        <taxon>Staphylococcaceae</taxon>
        <taxon>Staphylococcus</taxon>
    </lineage>
</organism>
<proteinExistence type="inferred from homology"/>
<name>PNP_STAA1</name>
<evidence type="ECO:0000255" key="1">
    <source>
        <dbReference type="HAMAP-Rule" id="MF_01595"/>
    </source>
</evidence>
<comment type="function">
    <text evidence="1">Involved in mRNA degradation. Catalyzes the phosphorolysis of single-stranded polyribonucleotides processively in the 3'- to 5'-direction.</text>
</comment>
<comment type="catalytic activity">
    <reaction evidence="1">
        <text>RNA(n+1) + phosphate = RNA(n) + a ribonucleoside 5'-diphosphate</text>
        <dbReference type="Rhea" id="RHEA:22096"/>
        <dbReference type="Rhea" id="RHEA-COMP:14527"/>
        <dbReference type="Rhea" id="RHEA-COMP:17342"/>
        <dbReference type="ChEBI" id="CHEBI:43474"/>
        <dbReference type="ChEBI" id="CHEBI:57930"/>
        <dbReference type="ChEBI" id="CHEBI:140395"/>
        <dbReference type="EC" id="2.7.7.8"/>
    </reaction>
</comment>
<comment type="cofactor">
    <cofactor evidence="1">
        <name>Mg(2+)</name>
        <dbReference type="ChEBI" id="CHEBI:18420"/>
    </cofactor>
</comment>
<comment type="subcellular location">
    <subcellularLocation>
        <location evidence="1">Cytoplasm</location>
    </subcellularLocation>
</comment>
<comment type="similarity">
    <text evidence="1">Belongs to the polyribonucleotide nucleotidyltransferase family.</text>
</comment>
<sequence length="698" mass="77362">MSQEKKVFKTEWAGRSLTIETGQLAKQANGAVLVRYGDTVVLSTATASKEPRDGDFFPLTVNYEEKMYAAGKIPGGFKKREGRPGDDATLTARLIDRPIRPLFPKGYKHDVQIMNMVLSADPDCSPQMAAMIGSSMALSVSDIPFQGPIAGVNVGYIDGKYIINPTVEEKEVSRLDLEVAGHKDAVNMVEAGASEITEQEMLEAIFFGHEEIQRLVDFQQQIVDHIQPVKQEFIPAERDEALVERVKSLTEEKGLKETVLTFDKQQRDENLDNLKEEIVNEFIDEEDPENELLIKEVYAILNELVKEEVRRLIADEKIRPDGRKPDEIRPLDSEVGILPRTHGSGLFTRGQTQALSVLTLGALGDYQLIDGLGPEEEKRFMHHYNFPNFSVGETGPVRAPGRREIGHGALGERALKYIIPDTADFPYTIRIVSEVLESNGSSSQASICGSTLALMDAGVPIKAPVAGIAMGLVTREDSYTILTDIQGMEDALGDMDFKVAGTKEGITAIQMDIKIDGLTREIIEEALEQARRGRLEIMNHMLQTIDQPRTELSAYAPKVVTMTIKPDKIRDVIGPGGKKINEIIDETGVKLDIEQDGTIFIGAVDQAMINRAREIIEEITREAEVGQTYQATVKRIEKYGAFVGLFPGKDALLHISQISKNRIEKVEDVLKIGDTIEVKITEIDKQGRVNASHRALEE</sequence>
<gene>
    <name evidence="1" type="primary">pnp</name>
    <name type="synonym">pnpA</name>
    <name type="ordered locus">SAHV_1264</name>
</gene>
<protein>
    <recommendedName>
        <fullName evidence="1">Polyribonucleotide nucleotidyltransferase</fullName>
        <ecNumber evidence="1">2.7.7.8</ecNumber>
    </recommendedName>
    <alternativeName>
        <fullName evidence="1">Polynucleotide phosphorylase</fullName>
        <shortName evidence="1">PNPase</shortName>
    </alternativeName>
</protein>